<gene>
    <name evidence="1" type="primary">groEL2</name>
    <name evidence="1" type="synonym">groL2</name>
    <name type="ordered locus">alr1896</name>
</gene>
<reference key="1">
    <citation type="journal article" date="2001" name="DNA Res.">
        <title>Complete genomic sequence of the filamentous nitrogen-fixing cyanobacterium Anabaena sp. strain PCC 7120.</title>
        <authorList>
            <person name="Kaneko T."/>
            <person name="Nakamura Y."/>
            <person name="Wolk C.P."/>
            <person name="Kuritz T."/>
            <person name="Sasamoto S."/>
            <person name="Watanabe A."/>
            <person name="Iriguchi M."/>
            <person name="Ishikawa A."/>
            <person name="Kawashima K."/>
            <person name="Kimura T."/>
            <person name="Kishida Y."/>
            <person name="Kohara M."/>
            <person name="Matsumoto M."/>
            <person name="Matsuno A."/>
            <person name="Muraki A."/>
            <person name="Nakazaki N."/>
            <person name="Shimpo S."/>
            <person name="Sugimoto M."/>
            <person name="Takazawa M."/>
            <person name="Yamada M."/>
            <person name="Yasuda M."/>
            <person name="Tabata S."/>
        </authorList>
    </citation>
    <scope>NUCLEOTIDE SEQUENCE [LARGE SCALE GENOMIC DNA]</scope>
    <source>
        <strain>PCC 7120 / SAG 25.82 / UTEX 2576</strain>
    </source>
</reference>
<organism>
    <name type="scientific">Nostoc sp. (strain PCC 7120 / SAG 25.82 / UTEX 2576)</name>
    <dbReference type="NCBI Taxonomy" id="103690"/>
    <lineage>
        <taxon>Bacteria</taxon>
        <taxon>Bacillati</taxon>
        <taxon>Cyanobacteriota</taxon>
        <taxon>Cyanophyceae</taxon>
        <taxon>Nostocales</taxon>
        <taxon>Nostocaceae</taxon>
        <taxon>Nostoc</taxon>
    </lineage>
</organism>
<sequence>MAKIISFDEESRRALERGVNALADAVKITLGPKGRNVLLEKKYGTPQIVNDGITVAKEIELEDPLENTGARLIQEVASKTKDVAGDGTTTATVLVQALIREGLKNVAAGTNPVSLKRGIDKTTEALVAEIAKVAKPVEGSAIAQVATVSSGNDEEVGAMIAQAVEKVTKDGVITVEESKSLTTELEVVEGMQIDRGYISPYFITNNERQTVELENVRILITDKKISSIQELVPVLEKVARLGQPLLIIAEDVEGDALATLVVNKARGVLSVAAIKAPGFGERRKALLQDIAILTDGQLISEEIGLSLDTASLEALGTAQKITIEKDNTTIVAGNTTKPEIQKRIAQIRRQLEETDSEYDSEKLQERIAKLAGGIAVIKVGAATETELKDRKLRIEDALNATKAAVAEGIVPGGGKTLIYLASKVDEIKKNFDEEEKIGADIVKRALEAPLRQIADNAGAEGSVIVSRVKDSDFNIGYNAATGEFEDLIAAGIIDPAKVVRSALQNAASIAGLVLTTEAIVVEKPEKKSAAPADAGMGGMGGMGGMGGMGGMGGMGGMGMF</sequence>
<proteinExistence type="inferred from homology"/>
<feature type="chain" id="PRO_0000063262" description="Chaperonin GroEL 2">
    <location>
        <begin position="1"/>
        <end position="560"/>
    </location>
</feature>
<feature type="binding site" evidence="1">
    <location>
        <begin position="29"/>
        <end position="32"/>
    </location>
    <ligand>
        <name>ATP</name>
        <dbReference type="ChEBI" id="CHEBI:30616"/>
    </ligand>
</feature>
<feature type="binding site" evidence="1">
    <location>
        <begin position="86"/>
        <end position="90"/>
    </location>
    <ligand>
        <name>ATP</name>
        <dbReference type="ChEBI" id="CHEBI:30616"/>
    </ligand>
</feature>
<feature type="binding site" evidence="1">
    <location>
        <position position="413"/>
    </location>
    <ligand>
        <name>ATP</name>
        <dbReference type="ChEBI" id="CHEBI:30616"/>
    </ligand>
</feature>
<feature type="binding site" evidence="1">
    <location>
        <begin position="478"/>
        <end position="480"/>
    </location>
    <ligand>
        <name>ATP</name>
        <dbReference type="ChEBI" id="CHEBI:30616"/>
    </ligand>
</feature>
<feature type="binding site" evidence="1">
    <location>
        <position position="494"/>
    </location>
    <ligand>
        <name>ATP</name>
        <dbReference type="ChEBI" id="CHEBI:30616"/>
    </ligand>
</feature>
<dbReference type="EC" id="5.6.1.7" evidence="1"/>
<dbReference type="EMBL" id="BA000019">
    <property type="protein sequence ID" value="BAB73595.1"/>
    <property type="molecule type" value="Genomic_DNA"/>
</dbReference>
<dbReference type="PIR" id="AB2043">
    <property type="entry name" value="AB2043"/>
</dbReference>
<dbReference type="SMR" id="Q8YVS8"/>
<dbReference type="STRING" id="103690.gene:10493915"/>
<dbReference type="KEGG" id="ana:alr1896"/>
<dbReference type="eggNOG" id="COG0459">
    <property type="taxonomic scope" value="Bacteria"/>
</dbReference>
<dbReference type="OrthoDB" id="9766614at2"/>
<dbReference type="Proteomes" id="UP000002483">
    <property type="component" value="Chromosome"/>
</dbReference>
<dbReference type="GO" id="GO:0005737">
    <property type="term" value="C:cytoplasm"/>
    <property type="evidence" value="ECO:0007669"/>
    <property type="project" value="UniProtKB-SubCell"/>
</dbReference>
<dbReference type="GO" id="GO:0005524">
    <property type="term" value="F:ATP binding"/>
    <property type="evidence" value="ECO:0007669"/>
    <property type="project" value="UniProtKB-UniRule"/>
</dbReference>
<dbReference type="GO" id="GO:0140662">
    <property type="term" value="F:ATP-dependent protein folding chaperone"/>
    <property type="evidence" value="ECO:0007669"/>
    <property type="project" value="InterPro"/>
</dbReference>
<dbReference type="GO" id="GO:0016853">
    <property type="term" value="F:isomerase activity"/>
    <property type="evidence" value="ECO:0007669"/>
    <property type="project" value="UniProtKB-KW"/>
</dbReference>
<dbReference type="GO" id="GO:0051082">
    <property type="term" value="F:unfolded protein binding"/>
    <property type="evidence" value="ECO:0007669"/>
    <property type="project" value="UniProtKB-UniRule"/>
</dbReference>
<dbReference type="GO" id="GO:0042026">
    <property type="term" value="P:protein refolding"/>
    <property type="evidence" value="ECO:0007669"/>
    <property type="project" value="UniProtKB-UniRule"/>
</dbReference>
<dbReference type="CDD" id="cd03344">
    <property type="entry name" value="GroEL"/>
    <property type="match status" value="1"/>
</dbReference>
<dbReference type="FunFam" id="3.50.7.10:FF:000001">
    <property type="entry name" value="60 kDa chaperonin"/>
    <property type="match status" value="1"/>
</dbReference>
<dbReference type="Gene3D" id="3.50.7.10">
    <property type="entry name" value="GroEL"/>
    <property type="match status" value="1"/>
</dbReference>
<dbReference type="Gene3D" id="1.10.560.10">
    <property type="entry name" value="GroEL-like equatorial domain"/>
    <property type="match status" value="1"/>
</dbReference>
<dbReference type="Gene3D" id="3.30.260.10">
    <property type="entry name" value="TCP-1-like chaperonin intermediate domain"/>
    <property type="match status" value="1"/>
</dbReference>
<dbReference type="HAMAP" id="MF_00600">
    <property type="entry name" value="CH60"/>
    <property type="match status" value="1"/>
</dbReference>
<dbReference type="InterPro" id="IPR001844">
    <property type="entry name" value="Cpn60/GroEL"/>
</dbReference>
<dbReference type="InterPro" id="IPR002423">
    <property type="entry name" value="Cpn60/GroEL/TCP-1"/>
</dbReference>
<dbReference type="InterPro" id="IPR027409">
    <property type="entry name" value="GroEL-like_apical_dom_sf"/>
</dbReference>
<dbReference type="InterPro" id="IPR027413">
    <property type="entry name" value="GROEL-like_equatorial_sf"/>
</dbReference>
<dbReference type="InterPro" id="IPR027410">
    <property type="entry name" value="TCP-1-like_intermed_sf"/>
</dbReference>
<dbReference type="NCBIfam" id="TIGR02348">
    <property type="entry name" value="GroEL"/>
    <property type="match status" value="1"/>
</dbReference>
<dbReference type="NCBIfam" id="NF000592">
    <property type="entry name" value="PRK00013.1"/>
    <property type="match status" value="1"/>
</dbReference>
<dbReference type="NCBIfam" id="NF009487">
    <property type="entry name" value="PRK12849.1"/>
    <property type="match status" value="1"/>
</dbReference>
<dbReference type="NCBIfam" id="NF009488">
    <property type="entry name" value="PRK12850.1"/>
    <property type="match status" value="1"/>
</dbReference>
<dbReference type="NCBIfam" id="NF009489">
    <property type="entry name" value="PRK12851.1"/>
    <property type="match status" value="1"/>
</dbReference>
<dbReference type="PANTHER" id="PTHR45633">
    <property type="entry name" value="60 KDA HEAT SHOCK PROTEIN, MITOCHONDRIAL"/>
    <property type="match status" value="1"/>
</dbReference>
<dbReference type="Pfam" id="PF00118">
    <property type="entry name" value="Cpn60_TCP1"/>
    <property type="match status" value="1"/>
</dbReference>
<dbReference type="PRINTS" id="PR00298">
    <property type="entry name" value="CHAPERONIN60"/>
</dbReference>
<dbReference type="SUPFAM" id="SSF52029">
    <property type="entry name" value="GroEL apical domain-like"/>
    <property type="match status" value="1"/>
</dbReference>
<dbReference type="SUPFAM" id="SSF48592">
    <property type="entry name" value="GroEL equatorial domain-like"/>
    <property type="match status" value="1"/>
</dbReference>
<dbReference type="SUPFAM" id="SSF54849">
    <property type="entry name" value="GroEL-intermediate domain like"/>
    <property type="match status" value="1"/>
</dbReference>
<protein>
    <recommendedName>
        <fullName evidence="1">Chaperonin GroEL 2</fullName>
        <ecNumber evidence="1">5.6.1.7</ecNumber>
    </recommendedName>
    <alternativeName>
        <fullName evidence="1">60 kDa chaperonin 2</fullName>
    </alternativeName>
    <alternativeName>
        <fullName evidence="1">Chaperonin-60 2</fullName>
        <shortName evidence="1">Cpn60 2</shortName>
    </alternativeName>
</protein>
<keyword id="KW-0067">ATP-binding</keyword>
<keyword id="KW-0143">Chaperone</keyword>
<keyword id="KW-0963">Cytoplasm</keyword>
<keyword id="KW-0413">Isomerase</keyword>
<keyword id="KW-0547">Nucleotide-binding</keyword>
<keyword id="KW-1185">Reference proteome</keyword>
<comment type="function">
    <text evidence="1">Together with its co-chaperonin GroES, plays an essential role in assisting protein folding. The GroEL-GroES system forms a nano-cage that allows encapsulation of the non-native substrate proteins and provides a physical environment optimized to promote and accelerate protein folding.</text>
</comment>
<comment type="catalytic activity">
    <reaction evidence="1">
        <text>ATP + H2O + a folded polypeptide = ADP + phosphate + an unfolded polypeptide.</text>
        <dbReference type="EC" id="5.6.1.7"/>
    </reaction>
</comment>
<comment type="subunit">
    <text evidence="1">Forms a cylinder of 14 subunits composed of two heptameric rings stacked back-to-back. Interacts with the co-chaperonin GroES.</text>
</comment>
<comment type="subcellular location">
    <subcellularLocation>
        <location evidence="1">Cytoplasm</location>
    </subcellularLocation>
</comment>
<comment type="similarity">
    <text evidence="1">Belongs to the chaperonin (HSP60) family.</text>
</comment>
<name>CH602_NOSS1</name>
<accession>Q8YVS8</accession>
<evidence type="ECO:0000255" key="1">
    <source>
        <dbReference type="HAMAP-Rule" id="MF_00600"/>
    </source>
</evidence>